<reference evidence="6" key="1">
    <citation type="journal article" date="2005" name="Science">
        <title>The genome of the African trypanosome Trypanosoma brucei.</title>
        <authorList>
            <person name="Berriman M."/>
            <person name="Ghedin E."/>
            <person name="Hertz-Fowler C."/>
            <person name="Blandin G."/>
            <person name="Renauld H."/>
            <person name="Bartholomeu D.C."/>
            <person name="Lennard N.J."/>
            <person name="Caler E."/>
            <person name="Hamlin N.E."/>
            <person name="Haas B."/>
            <person name="Bohme U."/>
            <person name="Hannick L."/>
            <person name="Aslett M.A."/>
            <person name="Shallom J."/>
            <person name="Marcello L."/>
            <person name="Hou L."/>
            <person name="Wickstead B."/>
            <person name="Alsmark U.C.M."/>
            <person name="Arrowsmith C."/>
            <person name="Atkin R.J."/>
            <person name="Barron A.J."/>
            <person name="Bringaud F."/>
            <person name="Brooks K."/>
            <person name="Carrington M."/>
            <person name="Cherevach I."/>
            <person name="Chillingworth T.J."/>
            <person name="Churcher C."/>
            <person name="Clark L.N."/>
            <person name="Corton C.H."/>
            <person name="Cronin A."/>
            <person name="Davies R.M."/>
            <person name="Doggett J."/>
            <person name="Djikeng A."/>
            <person name="Feldblyum T."/>
            <person name="Field M.C."/>
            <person name="Fraser A."/>
            <person name="Goodhead I."/>
            <person name="Hance Z."/>
            <person name="Harper D."/>
            <person name="Harris B.R."/>
            <person name="Hauser H."/>
            <person name="Hostetler J."/>
            <person name="Ivens A."/>
            <person name="Jagels K."/>
            <person name="Johnson D."/>
            <person name="Johnson J."/>
            <person name="Jones K."/>
            <person name="Kerhornou A.X."/>
            <person name="Koo H."/>
            <person name="Larke N."/>
            <person name="Landfear S."/>
            <person name="Larkin C."/>
            <person name="Leech V."/>
            <person name="Line A."/>
            <person name="Lord A."/>
            <person name="Macleod A."/>
            <person name="Mooney P.J."/>
            <person name="Moule S."/>
            <person name="Martin D.M."/>
            <person name="Morgan G.W."/>
            <person name="Mungall K."/>
            <person name="Norbertczak H."/>
            <person name="Ormond D."/>
            <person name="Pai G."/>
            <person name="Peacock C.S."/>
            <person name="Peterson J."/>
            <person name="Quail M.A."/>
            <person name="Rabbinowitsch E."/>
            <person name="Rajandream M.A."/>
            <person name="Reitter C."/>
            <person name="Salzberg S.L."/>
            <person name="Sanders M."/>
            <person name="Schobel S."/>
            <person name="Sharp S."/>
            <person name="Simmonds M."/>
            <person name="Simpson A.J."/>
            <person name="Tallon L."/>
            <person name="Turner C.M."/>
            <person name="Tait A."/>
            <person name="Tivey A.R."/>
            <person name="Van Aken S."/>
            <person name="Walker D."/>
            <person name="Wanless D."/>
            <person name="Wang S."/>
            <person name="White B."/>
            <person name="White O."/>
            <person name="Whitehead S."/>
            <person name="Woodward J."/>
            <person name="Wortman J."/>
            <person name="Adams M.D."/>
            <person name="Embley T.M."/>
            <person name="Gull K."/>
            <person name="Ullu E."/>
            <person name="Barry J.D."/>
            <person name="Fairlamb A.H."/>
            <person name="Opperdoes F."/>
            <person name="Barrell B.G."/>
            <person name="Donelson J.E."/>
            <person name="Hall N."/>
            <person name="Fraser C.M."/>
            <person name="Melville S.E."/>
            <person name="El-Sayed N.M.A."/>
        </authorList>
    </citation>
    <scope>NUCLEOTIDE SEQUENCE [LARGE SCALE GENOMIC DNA]</scope>
    <source>
        <strain evidence="6">927/4 GUTat10.1</strain>
    </source>
</reference>
<reference evidence="4" key="2">
    <citation type="journal article" date="2020" name="J. Biol. Chem.">
        <title>The RNA-associated proteins MKT1 and MKT1L form alternative PBP1-containing complexes in Trypanosoma brucei.</title>
        <authorList>
            <person name="Melo do Nascimento L."/>
            <person name="Terrao M."/>
            <person name="Marucha K.K."/>
            <person name="Liu B."/>
            <person name="Egler F."/>
            <person name="Clayton C."/>
        </authorList>
    </citation>
    <scope>FUNCTION</scope>
    <scope>IDENTIFICATION IN A COMPLEX WITH PBP1; LSM12 AND XAC1</scope>
    <scope>SUBCELLULAR LOCATION</scope>
    <scope>DEVELOPMENTAL STAGE</scope>
    <scope>DISRUPTION PHENOTYPE</scope>
    <scope>IDENTIFICATION BY MASS SPECTROMETRY</scope>
    <source>
        <strain evidence="3">427</strain>
    </source>
</reference>
<evidence type="ECO:0000256" key="1">
    <source>
        <dbReference type="SAM" id="MobiDB-lite"/>
    </source>
</evidence>
<evidence type="ECO:0000269" key="2">
    <source>
    </source>
</evidence>
<evidence type="ECO:0000303" key="3">
    <source>
    </source>
</evidence>
<evidence type="ECO:0000305" key="4"/>
<evidence type="ECO:0000312" key="5">
    <source>
        <dbReference type="EMBL" id="EAN77578.1"/>
    </source>
</evidence>
<evidence type="ECO:0000312" key="6">
    <source>
        <dbReference type="Proteomes" id="UP000008524"/>
    </source>
</evidence>
<protein>
    <recommendedName>
        <fullName evidence="4">Post-transcriptional regulator MKT1L</fullName>
    </recommendedName>
    <alternativeName>
        <fullName evidence="4">Inactive endonuclease MKT1L</fullName>
    </alternativeName>
</protein>
<organism evidence="6">
    <name type="scientific">Trypanosoma brucei brucei (strain 927/4 GUTat10.1)</name>
    <dbReference type="NCBI Taxonomy" id="185431"/>
    <lineage>
        <taxon>Eukaryota</taxon>
        <taxon>Discoba</taxon>
        <taxon>Euglenozoa</taxon>
        <taxon>Kinetoplastea</taxon>
        <taxon>Metakinetoplastina</taxon>
        <taxon>Trypanosomatida</taxon>
        <taxon>Trypanosomatidae</taxon>
        <taxon>Trypanosoma</taxon>
    </lineage>
</organism>
<accession>Q38C92</accession>
<feature type="chain" id="PRO_0000451926" description="Post-transcriptional regulator MKT1L">
    <location>
        <begin position="1"/>
        <end position="1220"/>
    </location>
</feature>
<feature type="region of interest" description="Disordered" evidence="1">
    <location>
        <begin position="1"/>
        <end position="107"/>
    </location>
</feature>
<feature type="compositionally biased region" description="Basic residues" evidence="1">
    <location>
        <begin position="34"/>
        <end position="70"/>
    </location>
</feature>
<name>MKT1L_TRYB2</name>
<gene>
    <name evidence="3" type="primary">MKT1L</name>
    <name evidence="5" type="ORF">Tb10.70.6480</name>
</gene>
<dbReference type="EMBL" id="CM000208">
    <property type="protein sequence ID" value="EAN77578.1"/>
    <property type="molecule type" value="Genomic_DNA"/>
</dbReference>
<dbReference type="RefSeq" id="XP_822406.1">
    <property type="nucleotide sequence ID" value="XM_817313.1"/>
</dbReference>
<dbReference type="PaxDb" id="5691-EAN77578"/>
<dbReference type="GeneID" id="3662740"/>
<dbReference type="KEGG" id="tbr:Tb10.70.6480"/>
<dbReference type="VEuPathDB" id="TriTrypDB:Tb927.10.1490"/>
<dbReference type="eggNOG" id="ENOG502R9RQ">
    <property type="taxonomic scope" value="Eukaryota"/>
</dbReference>
<dbReference type="InParanoid" id="Q38C92"/>
<dbReference type="OMA" id="PGMNSNW"/>
<dbReference type="OrthoDB" id="17262at2759"/>
<dbReference type="Proteomes" id="UP000008524">
    <property type="component" value="Chromosome 10"/>
</dbReference>
<dbReference type="GO" id="GO:0005737">
    <property type="term" value="C:cytoplasm"/>
    <property type="evidence" value="ECO:0007669"/>
    <property type="project" value="UniProtKB-SubCell"/>
</dbReference>
<dbReference type="GO" id="GO:0035061">
    <property type="term" value="C:interchromatin granule"/>
    <property type="evidence" value="ECO:0000314"/>
    <property type="project" value="GeneDB"/>
</dbReference>
<dbReference type="GO" id="GO:0008409">
    <property type="term" value="F:5'-3' exonuclease activity"/>
    <property type="evidence" value="ECO:0000318"/>
    <property type="project" value="GO_Central"/>
</dbReference>
<dbReference type="GO" id="GO:0017108">
    <property type="term" value="F:5'-flap endonuclease activity"/>
    <property type="evidence" value="ECO:0000318"/>
    <property type="project" value="GO_Central"/>
</dbReference>
<dbReference type="GO" id="GO:0006417">
    <property type="term" value="P:regulation of translation"/>
    <property type="evidence" value="ECO:0007669"/>
    <property type="project" value="UniProtKB-KW"/>
</dbReference>
<dbReference type="Gene3D" id="3.40.50.1010">
    <property type="entry name" value="5'-nuclease"/>
    <property type="match status" value="1"/>
</dbReference>
<dbReference type="InterPro" id="IPR022039">
    <property type="entry name" value="MKT1_C"/>
</dbReference>
<dbReference type="InterPro" id="IPR022040">
    <property type="entry name" value="MKT1_N"/>
</dbReference>
<dbReference type="InterPro" id="IPR029060">
    <property type="entry name" value="PIN-like_dom_sf"/>
</dbReference>
<dbReference type="InterPro" id="IPR006084">
    <property type="entry name" value="XPG/Rad2"/>
</dbReference>
<dbReference type="PANTHER" id="PTHR11081">
    <property type="entry name" value="FLAP ENDONUCLEASE FAMILY MEMBER"/>
    <property type="match status" value="1"/>
</dbReference>
<dbReference type="PANTHER" id="PTHR11081:SF28">
    <property type="entry name" value="POST-TRANSCRIPTIONAL REGULATOR MKT1L"/>
    <property type="match status" value="1"/>
</dbReference>
<dbReference type="Pfam" id="PF12246">
    <property type="entry name" value="MKT1_C"/>
    <property type="match status" value="1"/>
</dbReference>
<dbReference type="Pfam" id="PF12247">
    <property type="entry name" value="MKT1_N"/>
    <property type="match status" value="1"/>
</dbReference>
<dbReference type="SUPFAM" id="SSF88723">
    <property type="entry name" value="PIN domain-like"/>
    <property type="match status" value="1"/>
</dbReference>
<sequence>MRKAGANRNNERQGRNLGQQGPQMSPPGPSMMYPHHHQHQHHHQHQHQHQHQHQHPHQHPHQHHHHHPHHNGVYGNAYDNIRQPQMPPHSFGQGVSGSPWNSPPQQTPMYNQGYNQMSPGTGGGYGDMGGMYRDVHGGQYPSSPSHMGGGANIPYGRNPAMHNGLPAGAPLPGGYGALPHQGAHTPMGFGRGGQPLMEHMQPSGMYGAPMMRHDGYPDTRVSPPAQVGYGAGAPVGPPPPPPMPAGPPYGGVLPGAGVGPGGPMNASRPPAGIGGGGGGGGNAGYLEMRARGMGPQMPASNASRPPRIGTPDPGMMPPNRMNQSPMMGQGLPPQVGNFMPLPGVSPSPHAMIPTTPSMGDTFPGDDANMSGSTEALYDFLHDRGLVSVDNISKFFPEGYGKDDPALKVAVDGNFCLTSLRDELRKRDSLWFLHSTLPEELLMLVQQHVEWMRNMKLEPIWVFNGLSVSGDVETFLTTEAELRARDAVWSKLEDGEIPDEVEIQEAFDQPLGEDVQMAVARYLKEELGVMAVTAPFLNWAQMVAFHKEGIADLLMGPPEMLLLPYDEMKVIVQIDVSNSSVNYLDRDRVLRALFPNHVTETNTRVAGDRLMDLGLITATHAALSSARVTLNLSMQEVYEELSTPTPKFRSIKDFINAHACSQETGKKAGLSIKHSKGRGYLRYSAVFSTKSRDTPLVYLVRVLDPDLTNADMPTNLAGVLGHLVPLSLFYMQFSGLLSVRIMTAITQSYLRDECPVSDTKDYHTTLGLLMTMRSQVIGQILKRIAHPPPIKRTECLSWVRWFQPILAPMDRPRDLIDLDEWEISDSDQLKKLDEDCLADYSIASVLSVTADASRPAVEESNRPAGRVPIRYNSKRETFLAILLKSFDFLGYFSHSTAPNDAVDGMEMECCGMDGHDRGGSVPAAYHEKDLSSMKRSEASDINFMADEGLKDYPSVYFPIYLRATIKANPLDVQASFVLLTELVRVRIINSNPCRYINPANQQVEISMDDQDTNSDSRVLLASRIACLVKLPYRRASENLPFVWAPVYSRHLCAFTVMVRAMCRCLRELVEVITSTVFLSGNSSCSLQDFAEFASILPFGDVPSTIGGLLLHYVLVFPSDYQANLTSREERIEYLQGKFRDIPDLADHLHLVMSFTLQALYLINAYMLNDKETIVAKDQLTGTIVEDTIEMMWQKWRDHIDDNPPGDIHNLYPPRHQEPIPH</sequence>
<comment type="function">
    <text evidence="2">Involved in post-transcriptional regulation of gene expression.</text>
</comment>
<comment type="subunit">
    <text evidence="2">Forms a complex composed of at least MKT1L, PBP1, XAC1 and LSM12.</text>
</comment>
<comment type="subcellular location">
    <subcellularLocation>
        <location evidence="2">Cytoplasm</location>
    </subcellularLocation>
</comment>
<comment type="developmental stage">
    <text evidence="2">Expressed in the procyclic and bloodstream forms (at protein level).</text>
</comment>
<comment type="disruption phenotype">
    <text evidence="2">RNAi-mediated knockdown in both the procyclic and the bloodstream form is lethal.</text>
</comment>
<comment type="similarity">
    <text evidence="4">Belongs to the XPG/RAD2 endonuclease family.</text>
</comment>
<comment type="caution">
    <text evidence="4">Although it belongs to the XPG/RAD2 endonuclease family, only one of the seven Asp residues involved in Mg(2+) binding is conserved suggesting that it has no nuclease activity.</text>
</comment>
<proteinExistence type="evidence at protein level"/>
<keyword id="KW-0963">Cytoplasm</keyword>
<keyword id="KW-1185">Reference proteome</keyword>
<keyword id="KW-0810">Translation regulation</keyword>